<gene>
    <name evidence="1" type="primary">aroC</name>
    <name type="ordered locus">HPAG1_0648</name>
</gene>
<keyword id="KW-0028">Amino-acid biosynthesis</keyword>
<keyword id="KW-0057">Aromatic amino acid biosynthesis</keyword>
<keyword id="KW-0274">FAD</keyword>
<keyword id="KW-0285">Flavoprotein</keyword>
<keyword id="KW-0288">FMN</keyword>
<keyword id="KW-0456">Lyase</keyword>
<keyword id="KW-0521">NADP</keyword>
<accession>Q1CTK7</accession>
<proteinExistence type="inferred from homology"/>
<reference key="1">
    <citation type="journal article" date="2006" name="Proc. Natl. Acad. Sci. U.S.A.">
        <title>The complete genome sequence of a chronic atrophic gastritis Helicobacter pylori strain: evolution during disease progression.</title>
        <authorList>
            <person name="Oh J.D."/>
            <person name="Kling-Baeckhed H."/>
            <person name="Giannakis M."/>
            <person name="Xu J."/>
            <person name="Fulton R.S."/>
            <person name="Fulton L.A."/>
            <person name="Cordum H.S."/>
            <person name="Wang C."/>
            <person name="Elliott G."/>
            <person name="Edwards J."/>
            <person name="Mardis E.R."/>
            <person name="Engstrand L.G."/>
            <person name="Gordon J.I."/>
        </authorList>
    </citation>
    <scope>NUCLEOTIDE SEQUENCE [LARGE SCALE GENOMIC DNA]</scope>
    <source>
        <strain>HPAG1</strain>
    </source>
</reference>
<organism>
    <name type="scientific">Helicobacter pylori (strain HPAG1)</name>
    <dbReference type="NCBI Taxonomy" id="357544"/>
    <lineage>
        <taxon>Bacteria</taxon>
        <taxon>Pseudomonadati</taxon>
        <taxon>Campylobacterota</taxon>
        <taxon>Epsilonproteobacteria</taxon>
        <taxon>Campylobacterales</taxon>
        <taxon>Helicobacteraceae</taxon>
        <taxon>Helicobacter</taxon>
    </lineage>
</organism>
<comment type="function">
    <text evidence="1">Catalyzes the anti-1,4-elimination of the C-3 phosphate and the C-6 proR hydrogen from 5-enolpyruvylshikimate-3-phosphate (EPSP) to yield chorismate, which is the branch point compound that serves as the starting substrate for the three terminal pathways of aromatic amino acid biosynthesis. This reaction introduces a second double bond into the aromatic ring system.</text>
</comment>
<comment type="catalytic activity">
    <reaction evidence="1">
        <text>5-O-(1-carboxyvinyl)-3-phosphoshikimate = chorismate + phosphate</text>
        <dbReference type="Rhea" id="RHEA:21020"/>
        <dbReference type="ChEBI" id="CHEBI:29748"/>
        <dbReference type="ChEBI" id="CHEBI:43474"/>
        <dbReference type="ChEBI" id="CHEBI:57701"/>
        <dbReference type="EC" id="4.2.3.5"/>
    </reaction>
</comment>
<comment type="cofactor">
    <cofactor evidence="1">
        <name>FMNH2</name>
        <dbReference type="ChEBI" id="CHEBI:57618"/>
    </cofactor>
    <text evidence="1">Reduced FMN (FMNH(2)).</text>
</comment>
<comment type="pathway">
    <text evidence="1">Metabolic intermediate biosynthesis; chorismate biosynthesis; chorismate from D-erythrose 4-phosphate and phosphoenolpyruvate: step 7/7.</text>
</comment>
<comment type="subunit">
    <text evidence="1">Homotetramer.</text>
</comment>
<comment type="similarity">
    <text evidence="1">Belongs to the chorismate synthase family.</text>
</comment>
<name>AROC_HELPH</name>
<evidence type="ECO:0000255" key="1">
    <source>
        <dbReference type="HAMAP-Rule" id="MF_00300"/>
    </source>
</evidence>
<protein>
    <recommendedName>
        <fullName evidence="1">Chorismate synthase</fullName>
        <shortName evidence="1">CS</shortName>
        <ecNumber evidence="1">4.2.3.5</ecNumber>
    </recommendedName>
    <alternativeName>
        <fullName evidence="1">5-enolpyruvylshikimate-3-phosphate phospholyase</fullName>
    </alternativeName>
</protein>
<dbReference type="EC" id="4.2.3.5" evidence="1"/>
<dbReference type="EMBL" id="CP000241">
    <property type="protein sequence ID" value="ABF84715.1"/>
    <property type="molecule type" value="Genomic_DNA"/>
</dbReference>
<dbReference type="RefSeq" id="WP_001093955.1">
    <property type="nucleotide sequence ID" value="NC_008086.1"/>
</dbReference>
<dbReference type="SMR" id="Q1CTK7"/>
<dbReference type="KEGG" id="hpa:HPAG1_0648"/>
<dbReference type="HOGENOM" id="CLU_034547_0_2_7"/>
<dbReference type="UniPathway" id="UPA00053">
    <property type="reaction ID" value="UER00090"/>
</dbReference>
<dbReference type="GO" id="GO:0005829">
    <property type="term" value="C:cytosol"/>
    <property type="evidence" value="ECO:0007669"/>
    <property type="project" value="TreeGrafter"/>
</dbReference>
<dbReference type="GO" id="GO:0004107">
    <property type="term" value="F:chorismate synthase activity"/>
    <property type="evidence" value="ECO:0007669"/>
    <property type="project" value="UniProtKB-UniRule"/>
</dbReference>
<dbReference type="GO" id="GO:0010181">
    <property type="term" value="F:FMN binding"/>
    <property type="evidence" value="ECO:0007669"/>
    <property type="project" value="TreeGrafter"/>
</dbReference>
<dbReference type="GO" id="GO:0008652">
    <property type="term" value="P:amino acid biosynthetic process"/>
    <property type="evidence" value="ECO:0007669"/>
    <property type="project" value="UniProtKB-KW"/>
</dbReference>
<dbReference type="GO" id="GO:0009073">
    <property type="term" value="P:aromatic amino acid family biosynthetic process"/>
    <property type="evidence" value="ECO:0007669"/>
    <property type="project" value="UniProtKB-KW"/>
</dbReference>
<dbReference type="GO" id="GO:0009423">
    <property type="term" value="P:chorismate biosynthetic process"/>
    <property type="evidence" value="ECO:0007669"/>
    <property type="project" value="UniProtKB-UniRule"/>
</dbReference>
<dbReference type="CDD" id="cd07304">
    <property type="entry name" value="Chorismate_synthase"/>
    <property type="match status" value="1"/>
</dbReference>
<dbReference type="FunFam" id="3.60.150.10:FF:000011">
    <property type="entry name" value="Chorismate synthase"/>
    <property type="match status" value="1"/>
</dbReference>
<dbReference type="Gene3D" id="3.60.150.10">
    <property type="entry name" value="Chorismate synthase AroC"/>
    <property type="match status" value="1"/>
</dbReference>
<dbReference type="HAMAP" id="MF_00300">
    <property type="entry name" value="Chorismate_synth"/>
    <property type="match status" value="1"/>
</dbReference>
<dbReference type="InterPro" id="IPR000453">
    <property type="entry name" value="Chorismate_synth"/>
</dbReference>
<dbReference type="InterPro" id="IPR035904">
    <property type="entry name" value="Chorismate_synth_AroC_sf"/>
</dbReference>
<dbReference type="InterPro" id="IPR020541">
    <property type="entry name" value="Chorismate_synthase_CS"/>
</dbReference>
<dbReference type="NCBIfam" id="TIGR00033">
    <property type="entry name" value="aroC"/>
    <property type="match status" value="1"/>
</dbReference>
<dbReference type="NCBIfam" id="NF003793">
    <property type="entry name" value="PRK05382.1"/>
    <property type="match status" value="1"/>
</dbReference>
<dbReference type="PANTHER" id="PTHR21085">
    <property type="entry name" value="CHORISMATE SYNTHASE"/>
    <property type="match status" value="1"/>
</dbReference>
<dbReference type="PANTHER" id="PTHR21085:SF0">
    <property type="entry name" value="CHORISMATE SYNTHASE"/>
    <property type="match status" value="1"/>
</dbReference>
<dbReference type="Pfam" id="PF01264">
    <property type="entry name" value="Chorismate_synt"/>
    <property type="match status" value="1"/>
</dbReference>
<dbReference type="PIRSF" id="PIRSF001456">
    <property type="entry name" value="Chorismate_synth"/>
    <property type="match status" value="1"/>
</dbReference>
<dbReference type="SUPFAM" id="SSF103263">
    <property type="entry name" value="Chorismate synthase, AroC"/>
    <property type="match status" value="1"/>
</dbReference>
<dbReference type="PROSITE" id="PS00787">
    <property type="entry name" value="CHORISMATE_SYNTHASE_1"/>
    <property type="match status" value="1"/>
</dbReference>
<dbReference type="PROSITE" id="PS00788">
    <property type="entry name" value="CHORISMATE_SYNTHASE_2"/>
    <property type="match status" value="1"/>
</dbReference>
<dbReference type="PROSITE" id="PS00789">
    <property type="entry name" value="CHORISMATE_SYNTHASE_3"/>
    <property type="match status" value="1"/>
</dbReference>
<sequence length="365" mass="40188">MNTLGCFLRLTTFGESHGDMIGGVLDGMPSGIKIDYALLENEMKRRQGGRNVFITPRKEDDKVEITSGVFEDFSTGTPIGFLIHNQRARSKDYDNIKNLFRPSHADFTYFHKYGIRDFRGGGRSSARESAIRVAAGAFAKMLLREIGIVCESGIIEIGGIEAKNYDFNHALKSEIFALDKEQEEAQKTAIQNAIKNHDSIGGVALIRARSVKRNQKLPIGLGQGLYAKLDAKIAEAMMGLNGVKAVEIGKGVESSLLKGSEYNDLMDQKGFLSNRSGGVLGGMSNGEEIIVRVHFKPTPSIFQPQQTIDINNHECECLLKGRHDPCIAIRGSVVCESLLSLVLADMVLLNLTSKIEYLKTIYNEN</sequence>
<feature type="chain" id="PRO_0000256298" description="Chorismate synthase">
    <location>
        <begin position="1"/>
        <end position="365"/>
    </location>
</feature>
<feature type="binding site" evidence="1">
    <location>
        <position position="46"/>
    </location>
    <ligand>
        <name>NADP(+)</name>
        <dbReference type="ChEBI" id="CHEBI:58349"/>
    </ligand>
</feature>
<feature type="binding site" evidence="1">
    <location>
        <begin position="123"/>
        <end position="125"/>
    </location>
    <ligand>
        <name>FMN</name>
        <dbReference type="ChEBI" id="CHEBI:58210"/>
    </ligand>
</feature>
<feature type="binding site" evidence="1">
    <location>
        <begin position="241"/>
        <end position="242"/>
    </location>
    <ligand>
        <name>FMN</name>
        <dbReference type="ChEBI" id="CHEBI:58210"/>
    </ligand>
</feature>
<feature type="binding site" evidence="1">
    <location>
        <position position="281"/>
    </location>
    <ligand>
        <name>FMN</name>
        <dbReference type="ChEBI" id="CHEBI:58210"/>
    </ligand>
</feature>
<feature type="binding site" evidence="1">
    <location>
        <begin position="296"/>
        <end position="300"/>
    </location>
    <ligand>
        <name>FMN</name>
        <dbReference type="ChEBI" id="CHEBI:58210"/>
    </ligand>
</feature>
<feature type="binding site" evidence="1">
    <location>
        <position position="322"/>
    </location>
    <ligand>
        <name>FMN</name>
        <dbReference type="ChEBI" id="CHEBI:58210"/>
    </ligand>
</feature>